<sequence length="238" mass="25461">MFLARNVSRVALRSASLSPAAIPQQQHAGVAAVYAVRFASSSGSGRPADNWAESQKEKAKAGLKDAQAEVGKVAREVKDKAAGGIEQAKDAVKQGANDLKRSGSRTFENAKDDIQAKAQHAKSDLKGAKHQAEGVVENVKEAAENAWEKTKDVAENLKDKVQSPGGLADKAANAWETVKDRAQDAASEVKHKAGDLKDKAQQVIHDATTQSGDNRKQDQQQRRDSQGSQSGQNSRSRN</sequence>
<feature type="chain" id="PRO_0000440196" description="Group 3 late-embryogenesis abundant protein, mitochondrial">
    <location>
        <begin position="1"/>
        <end position="238"/>
    </location>
</feature>
<feature type="repeat" description="LEA 11-mer repeat 1" evidence="1">
    <location>
        <begin position="64"/>
        <end position="74"/>
    </location>
</feature>
<feature type="repeat" description="LEA 11-mer repeat 2" evidence="1">
    <location>
        <begin position="89"/>
        <end position="99"/>
    </location>
</feature>
<feature type="repeat" description="LEA 11-mer repeat 3" evidence="1">
    <location>
        <begin position="140"/>
        <end position="150"/>
    </location>
</feature>
<feature type="repeat" description="LEA 11-mer repeat 4" evidence="1">
    <location>
        <begin position="151"/>
        <end position="161"/>
    </location>
</feature>
<feature type="repeat" description="LEA 11-mer repeat 5" evidence="1">
    <location>
        <begin position="179"/>
        <end position="189"/>
    </location>
</feature>
<feature type="repeat" description="LEA 11-mer repeat 6" evidence="1">
    <location>
        <begin position="190"/>
        <end position="200"/>
    </location>
</feature>
<feature type="region of interest" description="Disordered" evidence="3">
    <location>
        <begin position="41"/>
        <end position="62"/>
    </location>
</feature>
<feature type="region of interest" description="Disordered" evidence="3">
    <location>
        <begin position="182"/>
        <end position="238"/>
    </location>
</feature>
<feature type="coiled-coil region" evidence="2">
    <location>
        <begin position="50"/>
        <end position="202"/>
    </location>
</feature>
<feature type="compositionally biased region" description="Basic and acidic residues" evidence="3">
    <location>
        <begin position="182"/>
        <end position="200"/>
    </location>
</feature>
<feature type="compositionally biased region" description="Basic and acidic residues" evidence="3">
    <location>
        <begin position="213"/>
        <end position="225"/>
    </location>
</feature>
<feature type="compositionally biased region" description="Low complexity" evidence="3">
    <location>
        <begin position="226"/>
        <end position="238"/>
    </location>
</feature>
<accession>P0CU49</accession>
<evidence type="ECO:0000250" key="1">
    <source>
        <dbReference type="UniProtKB" id="A0A0E4AVP3"/>
    </source>
</evidence>
<evidence type="ECO:0000255" key="2"/>
<evidence type="ECO:0000256" key="3">
    <source>
        <dbReference type="SAM" id="MobiDB-lite"/>
    </source>
</evidence>
<evidence type="ECO:0000269" key="4">
    <source>
    </source>
</evidence>
<evidence type="ECO:0000269" key="5">
    <source>
    </source>
</evidence>
<evidence type="ECO:0000303" key="6">
    <source>
    </source>
</evidence>
<evidence type="ECO:0000305" key="7"/>
<comment type="function">
    <text evidence="1 4 5">Mitochondrial heat soluble protein acting as a molecular shield in water-deficient condition.</text>
</comment>
<comment type="subcellular location">
    <subcellularLocation>
        <location evidence="1">Mitochondrion</location>
    </subcellularLocation>
</comment>
<comment type="domain">
    <text evidence="1">Contiguous repeats of the 11-mer LEA motif is characteristic of group 3 LEA proteins and form an amphipathic helical structure under water-deficient conditions.</text>
</comment>
<comment type="similarity">
    <text evidence="7">Belongs to the LEA type 4 family.</text>
</comment>
<comment type="caution">
    <text evidence="4 5">Was identified as a CAHS family protein, an intrinsically unstructured protein that shows heat-dependent glass transition, which contributes to the vitrification of cells, and this further leads to desiccation tolerance (PubMed:28306513). However, it actually belongs to the LEA type 4 family of proteins and there was no evidence supporting glass transition itself to be contributing to the glass transition of the whole tardigrade (PubMed:33545053).</text>
</comment>
<dbReference type="SMR" id="P0CU49"/>
<dbReference type="OrthoDB" id="5838520at2759"/>
<dbReference type="GO" id="GO:0005739">
    <property type="term" value="C:mitochondrion"/>
    <property type="evidence" value="ECO:0007669"/>
    <property type="project" value="UniProtKB-SubCell"/>
</dbReference>
<dbReference type="GO" id="GO:0009269">
    <property type="term" value="P:response to desiccation"/>
    <property type="evidence" value="ECO:0000315"/>
    <property type="project" value="DisProt"/>
</dbReference>
<dbReference type="DisProt" id="DP01386"/>
<dbReference type="Gene3D" id="6.10.140.1430">
    <property type="match status" value="1"/>
</dbReference>
<dbReference type="Gene3D" id="1.20.120.20">
    <property type="entry name" value="Apolipoprotein"/>
    <property type="match status" value="1"/>
</dbReference>
<protein>
    <recommendedName>
        <fullName evidence="1">Group 3 late-embryogenesis abundant protein, mitochondrial</fullName>
        <shortName evidence="1">LEAM</shortName>
    </recommendedName>
</protein>
<name>LEAM_HYPEX</name>
<organism evidence="6">
    <name type="scientific">Hypsibius exemplaris</name>
    <name type="common">Freshwater tardigrade</name>
    <dbReference type="NCBI Taxonomy" id="2072580"/>
    <lineage>
        <taxon>Eukaryota</taxon>
        <taxon>Metazoa</taxon>
        <taxon>Ecdysozoa</taxon>
        <taxon>Tardigrada</taxon>
        <taxon>Eutardigrada</taxon>
        <taxon>Parachela</taxon>
        <taxon>Hypsibioidea</taxon>
        <taxon>Hypsibiidae</taxon>
        <taxon>Hypsibius</taxon>
    </lineage>
</organism>
<proteinExistence type="inferred from homology"/>
<reference key="1">
    <citation type="journal article" date="2017" name="Mol. Cell">
        <title>Tardigrades use intrinsically disordered proteins to survive desiccation.</title>
        <authorList>
            <person name="Boothby T.C."/>
            <person name="Tapia H."/>
            <person name="Brozena A.H."/>
            <person name="Piszkiewicz S."/>
            <person name="Smith A.E."/>
            <person name="Giovannini I."/>
            <person name="Rebecchi L."/>
            <person name="Pielak G.J."/>
            <person name="Koshland D."/>
            <person name="Goldstein B."/>
        </authorList>
    </citation>
    <scope>FUNCTION</scope>
</reference>
<reference key="2">
    <citation type="journal article" date="2021" name="Mol. Cell">
        <title>Reconsidering the 'glass transition' hypothesis of intrinsically unstructured CAHS proteins in desiccation tolerance of tardigrades.</title>
        <authorList>
            <person name="Arakawa K."/>
            <person name="Numata K."/>
        </authorList>
    </citation>
    <scope>FUNCTION</scope>
</reference>
<keyword id="KW-0175">Coiled coil</keyword>
<keyword id="KW-0496">Mitochondrion</keyword>
<keyword id="KW-0677">Repeat</keyword>
<keyword id="KW-0346">Stress response</keyword>